<reference key="1">
    <citation type="submission" date="1997-01" db="EMBL/GenBank/DDBJ databases">
        <authorList>
            <person name="Ward D.V."/>
            <person name="Newton A."/>
        </authorList>
    </citation>
    <scope>NUCLEOTIDE SEQUENCE [GENOMIC DNA]</scope>
    <source>
        <strain>ATCC 19089 / CIP 103742 / CB 15</strain>
    </source>
</reference>
<reference key="2">
    <citation type="journal article" date="2001" name="Proc. Natl. Acad. Sci. U.S.A.">
        <title>Complete genome sequence of Caulobacter crescentus.</title>
        <authorList>
            <person name="Nierman W.C."/>
            <person name="Feldblyum T.V."/>
            <person name="Laub M.T."/>
            <person name="Paulsen I.T."/>
            <person name="Nelson K.E."/>
            <person name="Eisen J.A."/>
            <person name="Heidelberg J.F."/>
            <person name="Alley M.R.K."/>
            <person name="Ohta N."/>
            <person name="Maddock J.R."/>
            <person name="Potocka I."/>
            <person name="Nelson W.C."/>
            <person name="Newton A."/>
            <person name="Stephens C."/>
            <person name="Phadke N.D."/>
            <person name="Ely B."/>
            <person name="DeBoy R.T."/>
            <person name="Dodson R.J."/>
            <person name="Durkin A.S."/>
            <person name="Gwinn M.L."/>
            <person name="Haft D.H."/>
            <person name="Kolonay J.F."/>
            <person name="Smit J."/>
            <person name="Craven M.B."/>
            <person name="Khouri H.M."/>
            <person name="Shetty J."/>
            <person name="Berry K.J."/>
            <person name="Utterback T.R."/>
            <person name="Tran K."/>
            <person name="Wolf A.M."/>
            <person name="Vamathevan J.J."/>
            <person name="Ermolaeva M.D."/>
            <person name="White O."/>
            <person name="Salzberg S.L."/>
            <person name="Venter J.C."/>
            <person name="Shapiro L."/>
            <person name="Fraser C.M."/>
        </authorList>
    </citation>
    <scope>NUCLEOTIDE SEQUENCE [LARGE SCALE GENOMIC DNA]</scope>
    <source>
        <strain>ATCC 19089 / CIP 103742 / CB 15</strain>
    </source>
</reference>
<reference key="3">
    <citation type="journal article" date="1997" name="Mol. Microbiol.">
        <title>Requirement of topoisomerase IV parC and parE genes for cell cycle progression and developmental regulation in Caulobacter crescentus.</title>
        <authorList>
            <person name="Ward D.V."/>
            <person name="Newton A."/>
        </authorList>
    </citation>
    <scope>NUCLEOTIDE SEQUENCE [GENOMIC DNA] OF 26-695</scope>
    <source>
        <strain>ATCC 19089 / CIP 103742 / CB 15</strain>
    </source>
</reference>
<comment type="function">
    <text evidence="1">Topoisomerase IV is essential for chromosome segregation. It relaxes supercoiled DNA. Performs the decatenation events required during the replication of a circular DNA molecule.</text>
</comment>
<comment type="catalytic activity">
    <reaction evidence="1">
        <text>ATP-dependent breakage, passage and rejoining of double-stranded DNA.</text>
        <dbReference type="EC" id="5.6.2.2"/>
    </reaction>
</comment>
<comment type="cofactor">
    <cofactor evidence="1">
        <name>Mg(2+)</name>
        <dbReference type="ChEBI" id="CHEBI:18420"/>
    </cofactor>
    <cofactor evidence="1">
        <name>Mn(2+)</name>
        <dbReference type="ChEBI" id="CHEBI:29035"/>
    </cofactor>
    <cofactor evidence="1">
        <name>Ca(2+)</name>
        <dbReference type="ChEBI" id="CHEBI:29108"/>
    </cofactor>
    <text evidence="1">Binds two Mg(2+) per subunit. The magnesium ions form salt bridges with both the protein and the DNA. Can also accept other divalent metal cations, such as Mn(2+) or Ca(2+).</text>
</comment>
<comment type="subunit">
    <text>Heterotetramer composed of ParC and ParE.</text>
</comment>
<comment type="similarity">
    <text evidence="1">Belongs to the type II topoisomerase family. ParE type 1 subfamily.</text>
</comment>
<comment type="sequence caution" evidence="3">
    <conflict type="erroneous initiation">
        <sequence resource="EMBL-CDS" id="AAC38044"/>
    </conflict>
</comment>
<comment type="sequence caution" evidence="3">
    <conflict type="erroneous initiation">
        <sequence resource="EMBL-CDS" id="AAF14340"/>
    </conflict>
</comment>
<keyword id="KW-0067">ATP-binding</keyword>
<keyword id="KW-0238">DNA-binding</keyword>
<keyword id="KW-0413">Isomerase</keyword>
<keyword id="KW-0460">Magnesium</keyword>
<keyword id="KW-0479">Metal-binding</keyword>
<keyword id="KW-0547">Nucleotide-binding</keyword>
<keyword id="KW-1185">Reference proteome</keyword>
<keyword id="KW-0799">Topoisomerase</keyword>
<accession>O54479</accession>
<gene>
    <name evidence="1" type="primary">parE</name>
    <name type="ordered locus">CC_1974</name>
</gene>
<dbReference type="EC" id="5.6.2.2" evidence="1"/>
<dbReference type="EMBL" id="U86303">
    <property type="protein sequence ID" value="AAF14340.1"/>
    <property type="status" value="ALT_INIT"/>
    <property type="molecule type" value="Genomic_DNA"/>
</dbReference>
<dbReference type="EMBL" id="AE005673">
    <property type="protein sequence ID" value="AAK23949.1"/>
    <property type="molecule type" value="Genomic_DNA"/>
</dbReference>
<dbReference type="EMBL" id="U94697">
    <property type="protein sequence ID" value="AAC38044.1"/>
    <property type="status" value="ALT_INIT"/>
    <property type="molecule type" value="Genomic_DNA"/>
</dbReference>
<dbReference type="PIR" id="A87494">
    <property type="entry name" value="A87494"/>
</dbReference>
<dbReference type="RefSeq" id="NP_420781.1">
    <property type="nucleotide sequence ID" value="NC_002696.2"/>
</dbReference>
<dbReference type="RefSeq" id="WP_010919840.1">
    <property type="nucleotide sequence ID" value="NC_002696.2"/>
</dbReference>
<dbReference type="SMR" id="O54479"/>
<dbReference type="STRING" id="190650.CC_1974"/>
<dbReference type="EnsemblBacteria" id="AAK23949">
    <property type="protein sequence ID" value="AAK23949"/>
    <property type="gene ID" value="CC_1974"/>
</dbReference>
<dbReference type="KEGG" id="ccr:CC_1974"/>
<dbReference type="PATRIC" id="fig|190650.5.peg.1991"/>
<dbReference type="eggNOG" id="COG0187">
    <property type="taxonomic scope" value="Bacteria"/>
</dbReference>
<dbReference type="HOGENOM" id="CLU_006146_4_1_5"/>
<dbReference type="BioCyc" id="CAULO:CC1974-MONOMER"/>
<dbReference type="Proteomes" id="UP000001816">
    <property type="component" value="Chromosome"/>
</dbReference>
<dbReference type="GO" id="GO:0005694">
    <property type="term" value="C:chromosome"/>
    <property type="evidence" value="ECO:0007669"/>
    <property type="project" value="InterPro"/>
</dbReference>
<dbReference type="GO" id="GO:0005524">
    <property type="term" value="F:ATP binding"/>
    <property type="evidence" value="ECO:0007669"/>
    <property type="project" value="UniProtKB-UniRule"/>
</dbReference>
<dbReference type="GO" id="GO:0003677">
    <property type="term" value="F:DNA binding"/>
    <property type="evidence" value="ECO:0007669"/>
    <property type="project" value="UniProtKB-UniRule"/>
</dbReference>
<dbReference type="GO" id="GO:0003918">
    <property type="term" value="F:DNA topoisomerase type II (double strand cut, ATP-hydrolyzing) activity"/>
    <property type="evidence" value="ECO:0007669"/>
    <property type="project" value="UniProtKB-UniRule"/>
</dbReference>
<dbReference type="GO" id="GO:0046872">
    <property type="term" value="F:metal ion binding"/>
    <property type="evidence" value="ECO:0007669"/>
    <property type="project" value="UniProtKB-KW"/>
</dbReference>
<dbReference type="GO" id="GO:0007059">
    <property type="term" value="P:chromosome segregation"/>
    <property type="evidence" value="ECO:0007669"/>
    <property type="project" value="UniProtKB-UniRule"/>
</dbReference>
<dbReference type="GO" id="GO:0006265">
    <property type="term" value="P:DNA topological change"/>
    <property type="evidence" value="ECO:0007669"/>
    <property type="project" value="UniProtKB-UniRule"/>
</dbReference>
<dbReference type="CDD" id="cd16928">
    <property type="entry name" value="HATPase_GyrB-like"/>
    <property type="match status" value="1"/>
</dbReference>
<dbReference type="CDD" id="cd00822">
    <property type="entry name" value="TopoII_Trans_DNA_gyrase"/>
    <property type="match status" value="1"/>
</dbReference>
<dbReference type="FunFam" id="3.30.565.10:FF:000002">
    <property type="entry name" value="DNA gyrase subunit B"/>
    <property type="match status" value="1"/>
</dbReference>
<dbReference type="FunFam" id="3.40.50.670:FF:000006">
    <property type="entry name" value="DNA topoisomerase (ATP-hydrolyzing)"/>
    <property type="match status" value="1"/>
</dbReference>
<dbReference type="Gene3D" id="3.30.230.10">
    <property type="match status" value="1"/>
</dbReference>
<dbReference type="Gene3D" id="3.40.50.670">
    <property type="match status" value="1"/>
</dbReference>
<dbReference type="Gene3D" id="3.30.565.10">
    <property type="entry name" value="Histidine kinase-like ATPase, C-terminal domain"/>
    <property type="match status" value="1"/>
</dbReference>
<dbReference type="HAMAP" id="MF_00938">
    <property type="entry name" value="ParE_type1"/>
    <property type="match status" value="1"/>
</dbReference>
<dbReference type="InterPro" id="IPR002288">
    <property type="entry name" value="DNA_gyrase_B_C"/>
</dbReference>
<dbReference type="InterPro" id="IPR036890">
    <property type="entry name" value="HATPase_C_sf"/>
</dbReference>
<dbReference type="InterPro" id="IPR020568">
    <property type="entry name" value="Ribosomal_Su5_D2-typ_SF"/>
</dbReference>
<dbReference type="InterPro" id="IPR014721">
    <property type="entry name" value="Ribsml_uS5_D2-typ_fold_subgr"/>
</dbReference>
<dbReference type="InterPro" id="IPR001241">
    <property type="entry name" value="Topo_IIA"/>
</dbReference>
<dbReference type="InterPro" id="IPR013760">
    <property type="entry name" value="Topo_IIA-like_dom_sf"/>
</dbReference>
<dbReference type="InterPro" id="IPR000565">
    <property type="entry name" value="Topo_IIA_B"/>
</dbReference>
<dbReference type="InterPro" id="IPR013759">
    <property type="entry name" value="Topo_IIA_B_C"/>
</dbReference>
<dbReference type="InterPro" id="IPR013506">
    <property type="entry name" value="Topo_IIA_bsu_dom2"/>
</dbReference>
<dbReference type="InterPro" id="IPR018522">
    <property type="entry name" value="TopoIIA_CS"/>
</dbReference>
<dbReference type="InterPro" id="IPR005737">
    <property type="entry name" value="TopoIV_B_Gneg"/>
</dbReference>
<dbReference type="InterPro" id="IPR006171">
    <property type="entry name" value="TOPRIM_dom"/>
</dbReference>
<dbReference type="NCBIfam" id="TIGR01055">
    <property type="entry name" value="parE_Gneg"/>
    <property type="match status" value="1"/>
</dbReference>
<dbReference type="PANTHER" id="PTHR45866">
    <property type="entry name" value="DNA GYRASE/TOPOISOMERASE SUBUNIT B"/>
    <property type="match status" value="1"/>
</dbReference>
<dbReference type="PANTHER" id="PTHR45866:SF4">
    <property type="entry name" value="DNA TOPOISOMERASE 4 SUBUNIT B"/>
    <property type="match status" value="1"/>
</dbReference>
<dbReference type="Pfam" id="PF00204">
    <property type="entry name" value="DNA_gyraseB"/>
    <property type="match status" value="1"/>
</dbReference>
<dbReference type="Pfam" id="PF00986">
    <property type="entry name" value="DNA_gyraseB_C"/>
    <property type="match status" value="1"/>
</dbReference>
<dbReference type="Pfam" id="PF02518">
    <property type="entry name" value="HATPase_c"/>
    <property type="match status" value="1"/>
</dbReference>
<dbReference type="Pfam" id="PF01751">
    <property type="entry name" value="Toprim"/>
    <property type="match status" value="1"/>
</dbReference>
<dbReference type="PRINTS" id="PR01159">
    <property type="entry name" value="DNAGYRASEB"/>
</dbReference>
<dbReference type="PRINTS" id="PR00418">
    <property type="entry name" value="TPI2FAMILY"/>
</dbReference>
<dbReference type="SMART" id="SM00387">
    <property type="entry name" value="HATPase_c"/>
    <property type="match status" value="1"/>
</dbReference>
<dbReference type="SMART" id="SM00433">
    <property type="entry name" value="TOP2c"/>
    <property type="match status" value="1"/>
</dbReference>
<dbReference type="SUPFAM" id="SSF55874">
    <property type="entry name" value="ATPase domain of HSP90 chaperone/DNA topoisomerase II/histidine kinase"/>
    <property type="match status" value="1"/>
</dbReference>
<dbReference type="SUPFAM" id="SSF54211">
    <property type="entry name" value="Ribosomal protein S5 domain 2-like"/>
    <property type="match status" value="1"/>
</dbReference>
<dbReference type="SUPFAM" id="SSF56719">
    <property type="entry name" value="Type II DNA topoisomerase"/>
    <property type="match status" value="1"/>
</dbReference>
<dbReference type="PROSITE" id="PS00177">
    <property type="entry name" value="TOPOISOMERASE_II"/>
    <property type="match status" value="1"/>
</dbReference>
<dbReference type="PROSITE" id="PS50880">
    <property type="entry name" value="TOPRIM"/>
    <property type="match status" value="1"/>
</dbReference>
<name>PARE_CAUVC</name>
<organism>
    <name type="scientific">Caulobacter vibrioides (strain ATCC 19089 / CIP 103742 / CB 15)</name>
    <name type="common">Caulobacter crescentus</name>
    <dbReference type="NCBI Taxonomy" id="190650"/>
    <lineage>
        <taxon>Bacteria</taxon>
        <taxon>Pseudomonadati</taxon>
        <taxon>Pseudomonadota</taxon>
        <taxon>Alphaproteobacteria</taxon>
        <taxon>Caulobacterales</taxon>
        <taxon>Caulobacteraceae</taxon>
        <taxon>Caulobacter</taxon>
    </lineage>
</organism>
<protein>
    <recommendedName>
        <fullName evidence="1">DNA topoisomerase 4 subunit B</fullName>
        <ecNumber evidence="1">5.6.2.2</ecNumber>
    </recommendedName>
    <alternativeName>
        <fullName evidence="1">Topoisomerase IV subunit B</fullName>
    </alternativeName>
</protein>
<proteinExistence type="inferred from homology"/>
<sequence>MSSSDKIPSLFGDDDALAPVPAAPFKASVEPRVEPTPRPIPPPPPSKTASAPGEYSAADIEVLEGLEPVRKRPGMYIGGTDERALHHLFAEVLDNSMDEAVAGFAKTIEVKLDADGFLSVKDDGRGMPVDPHPKYPGKSALEVIMTVLHAGGKFTGKAYETSGGLHGVGASVVNALSERVEVTVWRDGFEHLQVFSRGKPLGPIQQVAPSKKKGTMVRFKPDDEIFGEGTNFKPARLYRMARSKAYLFRGVQIKWSCDPSRIHDQTPPEATFHFPNGLADFLAERTKGLTTITPESFAGRIERQGEAGAVEWAVTWTPQGFGEHDGFMQSYCNTVPTPEGGTHESGFRAALTRGLKAYAELKGEKRGTIITADDVVAQAGALISVFIKNPEFQGQTKEKLSTSEAQRFVEASLRDPFDLWLSSSPKNAQALLEFVIERAEERLKRRKDKEVSRASATRKLRLPGKLADCAGSAVDGAELFIVEGDSAGGSAKQARDRKYQAILPLRGKILNVASASGEKFTANKELSDLMLALGAQAGAKYREEDLRYERIIIMTDADVDGAHIASLLITFFYRTMPELIRGGHLFLALPPLYRLAHGGKSEYARDDAHKEELLATVFKGKKPEIGRFKGLGEMMASQLKETTMDPKKRTLARVTLPRHEESVEDLVETLMGRKPELRFRFIQENAEFASADLDL</sequence>
<feature type="chain" id="PRO_0000145426" description="DNA topoisomerase 4 subunit B">
    <location>
        <begin position="1"/>
        <end position="695"/>
    </location>
</feature>
<feature type="domain" description="Toprim" evidence="1">
    <location>
        <begin position="477"/>
        <end position="591"/>
    </location>
</feature>
<feature type="region of interest" description="Disordered" evidence="2">
    <location>
        <begin position="1"/>
        <end position="53"/>
    </location>
</feature>
<feature type="compositionally biased region" description="Pro residues" evidence="2">
    <location>
        <begin position="36"/>
        <end position="46"/>
    </location>
</feature>
<feature type="binding site" evidence="1">
    <location>
        <position position="55"/>
    </location>
    <ligand>
        <name>ATP</name>
        <dbReference type="ChEBI" id="CHEBI:30616"/>
    </ligand>
</feature>
<feature type="binding site" evidence="1">
    <location>
        <position position="95"/>
    </location>
    <ligand>
        <name>ATP</name>
        <dbReference type="ChEBI" id="CHEBI:30616"/>
    </ligand>
</feature>
<feature type="binding site" evidence="1">
    <location>
        <position position="122"/>
    </location>
    <ligand>
        <name>ATP</name>
        <dbReference type="ChEBI" id="CHEBI:30616"/>
    </ligand>
</feature>
<feature type="binding site" evidence="1">
    <location>
        <begin position="164"/>
        <end position="170"/>
    </location>
    <ligand>
        <name>ATP</name>
        <dbReference type="ChEBI" id="CHEBI:30616"/>
    </ligand>
</feature>
<feature type="binding site" evidence="1">
    <location>
        <position position="397"/>
    </location>
    <ligand>
        <name>ATP</name>
        <dbReference type="ChEBI" id="CHEBI:30616"/>
    </ligand>
</feature>
<feature type="binding site" evidence="1">
    <location>
        <position position="483"/>
    </location>
    <ligand>
        <name>Mg(2+)</name>
        <dbReference type="ChEBI" id="CHEBI:18420"/>
        <label>1</label>
        <note>catalytic</note>
    </ligand>
</feature>
<feature type="binding site" evidence="1">
    <location>
        <position position="556"/>
    </location>
    <ligand>
        <name>Mg(2+)</name>
        <dbReference type="ChEBI" id="CHEBI:18420"/>
        <label>1</label>
        <note>catalytic</note>
    </ligand>
</feature>
<feature type="binding site" evidence="1">
    <location>
        <position position="556"/>
    </location>
    <ligand>
        <name>Mg(2+)</name>
        <dbReference type="ChEBI" id="CHEBI:18420"/>
        <label>2</label>
    </ligand>
</feature>
<feature type="binding site" evidence="1">
    <location>
        <position position="558"/>
    </location>
    <ligand>
        <name>Mg(2+)</name>
        <dbReference type="ChEBI" id="CHEBI:18420"/>
        <label>2</label>
    </ligand>
</feature>
<feature type="site" description="Interaction with DNA" evidence="1">
    <location>
        <position position="508"/>
    </location>
</feature>
<feature type="site" description="Interaction with DNA" evidence="1">
    <location>
        <position position="511"/>
    </location>
</feature>
<feature type="site" description="Interaction with DNA" evidence="1">
    <location>
        <position position="563"/>
    </location>
</feature>
<feature type="site" description="Interaction with DNA" evidence="1">
    <location>
        <position position="678"/>
    </location>
</feature>
<evidence type="ECO:0000255" key="1">
    <source>
        <dbReference type="HAMAP-Rule" id="MF_00938"/>
    </source>
</evidence>
<evidence type="ECO:0000256" key="2">
    <source>
        <dbReference type="SAM" id="MobiDB-lite"/>
    </source>
</evidence>
<evidence type="ECO:0000305" key="3"/>